<accession>Q478R6</accession>
<dbReference type="EC" id="2.1.1.-" evidence="1"/>
<dbReference type="EMBL" id="CP000089">
    <property type="protein sequence ID" value="AAZ48665.1"/>
    <property type="molecule type" value="Genomic_DNA"/>
</dbReference>
<dbReference type="SMR" id="Q478R6"/>
<dbReference type="STRING" id="159087.Daro_3937"/>
<dbReference type="KEGG" id="dar:Daro_3937"/>
<dbReference type="eggNOG" id="COG2264">
    <property type="taxonomic scope" value="Bacteria"/>
</dbReference>
<dbReference type="HOGENOM" id="CLU_049382_4_1_4"/>
<dbReference type="OrthoDB" id="9785995at2"/>
<dbReference type="GO" id="GO:0005829">
    <property type="term" value="C:cytosol"/>
    <property type="evidence" value="ECO:0007669"/>
    <property type="project" value="TreeGrafter"/>
</dbReference>
<dbReference type="GO" id="GO:0016279">
    <property type="term" value="F:protein-lysine N-methyltransferase activity"/>
    <property type="evidence" value="ECO:0007669"/>
    <property type="project" value="TreeGrafter"/>
</dbReference>
<dbReference type="GO" id="GO:0032259">
    <property type="term" value="P:methylation"/>
    <property type="evidence" value="ECO:0007669"/>
    <property type="project" value="UniProtKB-KW"/>
</dbReference>
<dbReference type="CDD" id="cd02440">
    <property type="entry name" value="AdoMet_MTases"/>
    <property type="match status" value="1"/>
</dbReference>
<dbReference type="Gene3D" id="3.40.50.150">
    <property type="entry name" value="Vaccinia Virus protein VP39"/>
    <property type="match status" value="1"/>
</dbReference>
<dbReference type="HAMAP" id="MF_00735">
    <property type="entry name" value="Methyltr_PrmA"/>
    <property type="match status" value="1"/>
</dbReference>
<dbReference type="InterPro" id="IPR050078">
    <property type="entry name" value="Ribosomal_L11_MeTrfase_PrmA"/>
</dbReference>
<dbReference type="InterPro" id="IPR004498">
    <property type="entry name" value="Ribosomal_PrmA_MeTrfase"/>
</dbReference>
<dbReference type="InterPro" id="IPR029063">
    <property type="entry name" value="SAM-dependent_MTases_sf"/>
</dbReference>
<dbReference type="NCBIfam" id="TIGR00406">
    <property type="entry name" value="prmA"/>
    <property type="match status" value="1"/>
</dbReference>
<dbReference type="PANTHER" id="PTHR43648">
    <property type="entry name" value="ELECTRON TRANSFER FLAVOPROTEIN BETA SUBUNIT LYSINE METHYLTRANSFERASE"/>
    <property type="match status" value="1"/>
</dbReference>
<dbReference type="PANTHER" id="PTHR43648:SF1">
    <property type="entry name" value="ELECTRON TRANSFER FLAVOPROTEIN BETA SUBUNIT LYSINE METHYLTRANSFERASE"/>
    <property type="match status" value="1"/>
</dbReference>
<dbReference type="Pfam" id="PF06325">
    <property type="entry name" value="PrmA"/>
    <property type="match status" value="1"/>
</dbReference>
<dbReference type="PIRSF" id="PIRSF000401">
    <property type="entry name" value="RPL11_MTase"/>
    <property type="match status" value="1"/>
</dbReference>
<dbReference type="SUPFAM" id="SSF53335">
    <property type="entry name" value="S-adenosyl-L-methionine-dependent methyltransferases"/>
    <property type="match status" value="1"/>
</dbReference>
<gene>
    <name evidence="1" type="primary">prmA</name>
    <name type="ordered locus">Daro_3937</name>
</gene>
<name>PRMA_DECAR</name>
<reference key="1">
    <citation type="journal article" date="2009" name="BMC Genomics">
        <title>Metabolic analysis of the soil microbe Dechloromonas aromatica str. RCB: indications of a surprisingly complex life-style and cryptic anaerobic pathways for aromatic degradation.</title>
        <authorList>
            <person name="Salinero K.K."/>
            <person name="Keller K."/>
            <person name="Feil W.S."/>
            <person name="Feil H."/>
            <person name="Trong S."/>
            <person name="Di Bartolo G."/>
            <person name="Lapidus A."/>
        </authorList>
    </citation>
    <scope>NUCLEOTIDE SEQUENCE [LARGE SCALE GENOMIC DNA]</scope>
    <source>
        <strain>RCB</strain>
    </source>
</reference>
<organism>
    <name type="scientific">Dechloromonas aromatica (strain RCB)</name>
    <dbReference type="NCBI Taxonomy" id="159087"/>
    <lineage>
        <taxon>Bacteria</taxon>
        <taxon>Pseudomonadati</taxon>
        <taxon>Pseudomonadota</taxon>
        <taxon>Betaproteobacteria</taxon>
        <taxon>Rhodocyclales</taxon>
        <taxon>Azonexaceae</taxon>
        <taxon>Dechloromonas</taxon>
    </lineage>
</organism>
<comment type="function">
    <text evidence="1">Methylates ribosomal protein L11.</text>
</comment>
<comment type="catalytic activity">
    <reaction evidence="1">
        <text>L-lysyl-[protein] + 3 S-adenosyl-L-methionine = N(6),N(6),N(6)-trimethyl-L-lysyl-[protein] + 3 S-adenosyl-L-homocysteine + 3 H(+)</text>
        <dbReference type="Rhea" id="RHEA:54192"/>
        <dbReference type="Rhea" id="RHEA-COMP:9752"/>
        <dbReference type="Rhea" id="RHEA-COMP:13826"/>
        <dbReference type="ChEBI" id="CHEBI:15378"/>
        <dbReference type="ChEBI" id="CHEBI:29969"/>
        <dbReference type="ChEBI" id="CHEBI:57856"/>
        <dbReference type="ChEBI" id="CHEBI:59789"/>
        <dbReference type="ChEBI" id="CHEBI:61961"/>
    </reaction>
</comment>
<comment type="subcellular location">
    <subcellularLocation>
        <location evidence="1">Cytoplasm</location>
    </subcellularLocation>
</comment>
<comment type="similarity">
    <text evidence="1">Belongs to the methyltransferase superfamily. PrmA family.</text>
</comment>
<feature type="chain" id="PRO_1000046017" description="Ribosomal protein L11 methyltransferase">
    <location>
        <begin position="1"/>
        <end position="296"/>
    </location>
</feature>
<feature type="binding site" evidence="1">
    <location>
        <position position="151"/>
    </location>
    <ligand>
        <name>S-adenosyl-L-methionine</name>
        <dbReference type="ChEBI" id="CHEBI:59789"/>
    </ligand>
</feature>
<feature type="binding site" evidence="1">
    <location>
        <position position="172"/>
    </location>
    <ligand>
        <name>S-adenosyl-L-methionine</name>
        <dbReference type="ChEBI" id="CHEBI:59789"/>
    </ligand>
</feature>
<feature type="binding site" evidence="1">
    <location>
        <position position="194"/>
    </location>
    <ligand>
        <name>S-adenosyl-L-methionine</name>
        <dbReference type="ChEBI" id="CHEBI:59789"/>
    </ligand>
</feature>
<feature type="binding site" evidence="1">
    <location>
        <position position="233"/>
    </location>
    <ligand>
        <name>S-adenosyl-L-methionine</name>
        <dbReference type="ChEBI" id="CHEBI:59789"/>
    </ligand>
</feature>
<protein>
    <recommendedName>
        <fullName evidence="1">Ribosomal protein L11 methyltransferase</fullName>
        <shortName evidence="1">L11 Mtase</shortName>
        <ecNumber evidence="1">2.1.1.-</ecNumber>
    </recommendedName>
</protein>
<keyword id="KW-0963">Cytoplasm</keyword>
<keyword id="KW-0489">Methyltransferase</keyword>
<keyword id="KW-0949">S-adenosyl-L-methionine</keyword>
<keyword id="KW-0808">Transferase</keyword>
<sequence>MGWQNVSFLTDVSHAEPMCDALLEAGALSASIEDADAGTPDEQPQFGEPGSVNTPGWMHSRVVVLLEPDADIEALLAEAGAAIGLSEIPAYSVENVAEQNWVQLTQSQFDPIRVSERLWIVPSWHETPDPAAVNLILDPGMAFGTGSHPTTRLCLEWLERNVSEACTVLDYGCGSGILAIAAARLGAGHVAGVDIDPQAVEAARANAERNGVTALFADSATPVAGEYDVVVANILSNPLRVLAPAICAHVRPGGKLALSGILREQIDEIIAIYAQWIPLQVADVREDWVCLAGIKP</sequence>
<proteinExistence type="inferred from homology"/>
<evidence type="ECO:0000255" key="1">
    <source>
        <dbReference type="HAMAP-Rule" id="MF_00735"/>
    </source>
</evidence>